<sequence>MNRQQNDLILQFAAVIIFFMVMVFGFSLFLAGHYTPGGGFVGGLLFASSLVIITIAFDIETMRKIFPLDFKILIGIGLVFCIATPIASWFLGKNFFTHVTFDIPLFILEPVHMTTAVFFDFGVLCAVVGTVMTIIISIGENE</sequence>
<protein>
    <recommendedName>
        <fullName>Na(+)/H(+) antiporter subunit B1</fullName>
    </recommendedName>
    <alternativeName>
        <fullName>Mnh complex subunit B1</fullName>
    </alternativeName>
</protein>
<feature type="chain" id="PRO_0000372112" description="Na(+)/H(+) antiporter subunit B1">
    <location>
        <begin position="1"/>
        <end position="142"/>
    </location>
</feature>
<feature type="transmembrane region" description="Helical" evidence="2">
    <location>
        <begin position="12"/>
        <end position="32"/>
    </location>
</feature>
<feature type="transmembrane region" description="Helical" evidence="2">
    <location>
        <begin position="37"/>
        <end position="57"/>
    </location>
</feature>
<feature type="transmembrane region" description="Helical" evidence="2">
    <location>
        <begin position="72"/>
        <end position="92"/>
    </location>
</feature>
<feature type="transmembrane region" description="Helical" evidence="2">
    <location>
        <begin position="116"/>
        <end position="136"/>
    </location>
</feature>
<keyword id="KW-0050">Antiport</keyword>
<keyword id="KW-1003">Cell membrane</keyword>
<keyword id="KW-0375">Hydrogen ion transport</keyword>
<keyword id="KW-0406">Ion transport</keyword>
<keyword id="KW-0472">Membrane</keyword>
<keyword id="KW-0915">Sodium</keyword>
<keyword id="KW-0739">Sodium transport</keyword>
<keyword id="KW-0812">Transmembrane</keyword>
<keyword id="KW-1133">Transmembrane helix</keyword>
<keyword id="KW-0813">Transport</keyword>
<accession>Q2FIC4</accession>
<gene>
    <name type="primary">mnhB1</name>
    <name type="ordered locus">SAUSA300_0854</name>
</gene>
<reference key="1">
    <citation type="journal article" date="2006" name="Lancet">
        <title>Complete genome sequence of USA300, an epidemic clone of community-acquired meticillin-resistant Staphylococcus aureus.</title>
        <authorList>
            <person name="Diep B.A."/>
            <person name="Gill S.R."/>
            <person name="Chang R.F."/>
            <person name="Phan T.H."/>
            <person name="Chen J.H."/>
            <person name="Davidson M.G."/>
            <person name="Lin F."/>
            <person name="Lin J."/>
            <person name="Carleton H.A."/>
            <person name="Mongodin E.F."/>
            <person name="Sensabaugh G.F."/>
            <person name="Perdreau-Remington F."/>
        </authorList>
    </citation>
    <scope>NUCLEOTIDE SEQUENCE [LARGE SCALE GENOMIC DNA]</scope>
    <source>
        <strain>USA300</strain>
    </source>
</reference>
<organism>
    <name type="scientific">Staphylococcus aureus (strain USA300)</name>
    <dbReference type="NCBI Taxonomy" id="367830"/>
    <lineage>
        <taxon>Bacteria</taxon>
        <taxon>Bacillati</taxon>
        <taxon>Bacillota</taxon>
        <taxon>Bacilli</taxon>
        <taxon>Bacillales</taxon>
        <taxon>Staphylococcaceae</taxon>
        <taxon>Staphylococcus</taxon>
    </lineage>
</organism>
<evidence type="ECO:0000250" key="1"/>
<evidence type="ECO:0000255" key="2"/>
<evidence type="ECO:0000305" key="3"/>
<dbReference type="EMBL" id="CP000255">
    <property type="protein sequence ID" value="ABD21398.1"/>
    <property type="molecule type" value="Genomic_DNA"/>
</dbReference>
<dbReference type="RefSeq" id="WP_001081626.1">
    <property type="nucleotide sequence ID" value="NZ_CP027476.1"/>
</dbReference>
<dbReference type="SMR" id="Q2FIC4"/>
<dbReference type="GeneID" id="66839149"/>
<dbReference type="KEGG" id="saa:SAUSA300_0854"/>
<dbReference type="HOGENOM" id="CLU_101659_1_1_9"/>
<dbReference type="OMA" id="HPGFLMP"/>
<dbReference type="Proteomes" id="UP000001939">
    <property type="component" value="Chromosome"/>
</dbReference>
<dbReference type="GO" id="GO:0005886">
    <property type="term" value="C:plasma membrane"/>
    <property type="evidence" value="ECO:0007669"/>
    <property type="project" value="UniProtKB-SubCell"/>
</dbReference>
<dbReference type="GO" id="GO:0015297">
    <property type="term" value="F:antiporter activity"/>
    <property type="evidence" value="ECO:0007669"/>
    <property type="project" value="UniProtKB-KW"/>
</dbReference>
<dbReference type="GO" id="GO:0008324">
    <property type="term" value="F:monoatomic cation transmembrane transporter activity"/>
    <property type="evidence" value="ECO:0007669"/>
    <property type="project" value="InterPro"/>
</dbReference>
<dbReference type="GO" id="GO:1902600">
    <property type="term" value="P:proton transmembrane transport"/>
    <property type="evidence" value="ECO:0007669"/>
    <property type="project" value="UniProtKB-KW"/>
</dbReference>
<dbReference type="GO" id="GO:0006814">
    <property type="term" value="P:sodium ion transport"/>
    <property type="evidence" value="ECO:0007669"/>
    <property type="project" value="UniProtKB-KW"/>
</dbReference>
<dbReference type="InterPro" id="IPR050622">
    <property type="entry name" value="CPA3_antiporter_subunitB"/>
</dbReference>
<dbReference type="InterPro" id="IPR005281">
    <property type="entry name" value="CPA3_sub_B"/>
</dbReference>
<dbReference type="InterPro" id="IPR007182">
    <property type="entry name" value="MnhB"/>
</dbReference>
<dbReference type="NCBIfam" id="TIGR00943">
    <property type="entry name" value="2a6301s02"/>
    <property type="match status" value="1"/>
</dbReference>
<dbReference type="NCBIfam" id="NF009223">
    <property type="entry name" value="PRK12573.1"/>
    <property type="match status" value="1"/>
</dbReference>
<dbReference type="PANTHER" id="PTHR33932">
    <property type="entry name" value="NA(+)/H(+) ANTIPORTER SUBUNIT B"/>
    <property type="match status" value="1"/>
</dbReference>
<dbReference type="PANTHER" id="PTHR33932:SF4">
    <property type="entry name" value="NA(+)_H(+) ANTIPORTER SUBUNIT B"/>
    <property type="match status" value="1"/>
</dbReference>
<dbReference type="Pfam" id="PF04039">
    <property type="entry name" value="MnhB"/>
    <property type="match status" value="1"/>
</dbReference>
<comment type="function">
    <text evidence="1">Mnh complex is a Na(+)/H(+) antiporter involved in Na(+) excretion.</text>
</comment>
<comment type="subunit">
    <text evidence="1">May form a heterooligomeric complex that consists of seven subunits: mnhA1, mnhB1, mnhC1, mnhD1, mnhE1, mnhF1 and mnhG1.</text>
</comment>
<comment type="subcellular location">
    <subcellularLocation>
        <location evidence="3">Cell membrane</location>
        <topology evidence="3">Multi-pass membrane protein</topology>
    </subcellularLocation>
</comment>
<comment type="similarity">
    <text evidence="3">Belongs to the CPA3 antiporters (TC 2.A.63) subunit B family.</text>
</comment>
<proteinExistence type="inferred from homology"/>
<name>MNHB1_STAA3</name>